<proteinExistence type="evidence at protein level"/>
<name>UFSP_CAEEL</name>
<feature type="chain" id="PRO_0000280370" description="Ufm1-specific protease">
    <location>
        <begin position="1"/>
        <end position="589"/>
    </location>
</feature>
<feature type="region of interest" description="Disordered" evidence="3">
    <location>
        <begin position="1"/>
        <end position="22"/>
    </location>
</feature>
<feature type="active site" evidence="11">
    <location>
        <position position="421"/>
    </location>
</feature>
<feature type="active site" evidence="1">
    <location>
        <position position="545"/>
    </location>
</feature>
<feature type="active site" evidence="11">
    <location>
        <position position="547"/>
    </location>
</feature>
<feature type="splice variant" id="VSP_023644" description="In isoform b." evidence="10">
    <location>
        <begin position="1"/>
        <end position="14"/>
    </location>
</feature>
<feature type="mutagenesis site" description="Strongly reduced ability to hydrolyze ufm-1 bound to a target protein." evidence="7">
    <original>Y</original>
    <variation>H</variation>
    <location>
        <position position="409"/>
    </location>
</feature>
<feature type="mutagenesis site" description="No significant effect on GPCR localization in AWA cilia." evidence="6">
    <original>C</original>
    <variation>A</variation>
    <location>
        <position position="421"/>
    </location>
</feature>
<feature type="mutagenesis site" description="Abolished ability to hydrolyze ufm-1 bound to a target protein. No significant effect on GPCR localization in AWA cilia or odorant chemotaxis." evidence="6 7">
    <original>C</original>
    <variation>S</variation>
    <location>
        <position position="421"/>
    </location>
</feature>
<feature type="mutagenesis site" description="Strongly reduced ability to hydrolyze ufm-1 bound to a target protein." evidence="7">
    <original>D</original>
    <variation>A</variation>
    <location>
        <position position="458"/>
    </location>
</feature>
<feature type="mutagenesis site" description="Strongly reduced ability to hydrolyze ufm-1 bound to a target protein." evidence="7">
    <original>W</original>
    <variation>A</variation>
    <location>
        <position position="469"/>
    </location>
</feature>
<feature type="mutagenesis site" description="Reduced ability to hydrolyze ufm-1 bound to a target protein." evidence="7">
    <original>R</original>
    <variation>A</variation>
    <location>
        <position position="488"/>
    </location>
</feature>
<feature type="mutagenesis site" description="Abolished ability to hydrolyze ufm-1 bound to a target protein. No significant effect on GPCR localization in AWA cilia or odorant chemotaxis." evidence="6 7">
    <original>H</original>
    <variation>A</variation>
    <location>
        <position position="547"/>
    </location>
</feature>
<feature type="mutagenesis site" description="Strongly reduced ability to hydrolyze ufm-1 bound to a target protein." evidence="7">
    <original>N</original>
    <variation>A</variation>
    <location>
        <position position="578"/>
    </location>
</feature>
<feature type="strand" evidence="14">
    <location>
        <begin position="29"/>
        <end position="31"/>
    </location>
</feature>
<feature type="helix" evidence="14">
    <location>
        <begin position="33"/>
        <end position="44"/>
    </location>
</feature>
<feature type="strand" evidence="15">
    <location>
        <begin position="50"/>
        <end position="53"/>
    </location>
</feature>
<feature type="strand" evidence="14">
    <location>
        <begin position="58"/>
        <end position="65"/>
    </location>
</feature>
<feature type="turn" evidence="14">
    <location>
        <begin position="66"/>
        <end position="69"/>
    </location>
</feature>
<feature type="strand" evidence="14">
    <location>
        <begin position="70"/>
        <end position="78"/>
    </location>
</feature>
<feature type="helix" evidence="14">
    <location>
        <begin position="79"/>
        <end position="81"/>
    </location>
</feature>
<feature type="helix" evidence="14">
    <location>
        <begin position="84"/>
        <end position="93"/>
    </location>
</feature>
<feature type="strand" evidence="14">
    <location>
        <begin position="99"/>
        <end position="106"/>
    </location>
</feature>
<feature type="strand" evidence="14">
    <location>
        <begin position="119"/>
        <end position="122"/>
    </location>
</feature>
<feature type="helix" evidence="14">
    <location>
        <begin position="124"/>
        <end position="129"/>
    </location>
</feature>
<feature type="helix" evidence="14">
    <location>
        <begin position="132"/>
        <end position="138"/>
    </location>
</feature>
<feature type="strand" evidence="14">
    <location>
        <begin position="142"/>
        <end position="144"/>
    </location>
</feature>
<feature type="strand" evidence="14">
    <location>
        <begin position="151"/>
        <end position="164"/>
    </location>
</feature>
<feature type="helix" evidence="14">
    <location>
        <begin position="169"/>
        <end position="181"/>
    </location>
</feature>
<feature type="helix" evidence="14">
    <location>
        <begin position="184"/>
        <end position="186"/>
    </location>
</feature>
<feature type="strand" evidence="14">
    <location>
        <begin position="188"/>
        <end position="191"/>
    </location>
</feature>
<feature type="turn" evidence="14">
    <location>
        <begin position="192"/>
        <end position="195"/>
    </location>
</feature>
<feature type="strand" evidence="14">
    <location>
        <begin position="196"/>
        <end position="198"/>
    </location>
</feature>
<feature type="helix" evidence="14">
    <location>
        <begin position="203"/>
        <end position="205"/>
    </location>
</feature>
<feature type="turn" evidence="14">
    <location>
        <begin position="208"/>
        <end position="211"/>
    </location>
</feature>
<feature type="helix" evidence="14">
    <location>
        <begin position="212"/>
        <end position="215"/>
    </location>
</feature>
<feature type="turn" evidence="14">
    <location>
        <begin position="220"/>
        <end position="222"/>
    </location>
</feature>
<feature type="strand" evidence="14">
    <location>
        <begin position="224"/>
        <end position="226"/>
    </location>
</feature>
<feature type="strand" evidence="14">
    <location>
        <begin position="228"/>
        <end position="230"/>
    </location>
</feature>
<feature type="strand" evidence="14">
    <location>
        <begin position="260"/>
        <end position="272"/>
    </location>
</feature>
<feature type="helix" evidence="14">
    <location>
        <begin position="278"/>
        <end position="305"/>
    </location>
</feature>
<feature type="strand" evidence="14">
    <location>
        <begin position="314"/>
        <end position="318"/>
    </location>
</feature>
<feature type="strand" evidence="14">
    <location>
        <begin position="327"/>
        <end position="331"/>
    </location>
</feature>
<feature type="helix" evidence="14">
    <location>
        <begin position="337"/>
        <end position="350"/>
    </location>
</feature>
<feature type="strand" evidence="15">
    <location>
        <begin position="355"/>
        <end position="357"/>
    </location>
</feature>
<feature type="helix" evidence="14">
    <location>
        <begin position="362"/>
        <end position="364"/>
    </location>
</feature>
<feature type="helix" evidence="14">
    <location>
        <begin position="384"/>
        <end position="387"/>
    </location>
</feature>
<feature type="strand" evidence="14">
    <location>
        <begin position="395"/>
        <end position="399"/>
    </location>
</feature>
<feature type="turn" evidence="14">
    <location>
        <begin position="417"/>
        <end position="420"/>
    </location>
</feature>
<feature type="helix" evidence="14">
    <location>
        <begin position="421"/>
        <end position="434"/>
    </location>
</feature>
<feature type="turn" evidence="14">
    <location>
        <begin position="435"/>
        <end position="437"/>
    </location>
</feature>
<feature type="helix" evidence="14">
    <location>
        <begin position="446"/>
        <end position="450"/>
    </location>
</feature>
<feature type="turn" evidence="15">
    <location>
        <begin position="460"/>
        <end position="462"/>
    </location>
</feature>
<feature type="strand" evidence="15">
    <location>
        <begin position="463"/>
        <end position="465"/>
    </location>
</feature>
<feature type="helix" evidence="14">
    <location>
        <begin position="472"/>
        <end position="482"/>
    </location>
</feature>
<feature type="strand" evidence="14">
    <location>
        <begin position="487"/>
        <end position="494"/>
    </location>
</feature>
<feature type="helix" evidence="14">
    <location>
        <begin position="495"/>
        <end position="497"/>
    </location>
</feature>
<feature type="helix" evidence="14">
    <location>
        <begin position="499"/>
        <end position="501"/>
    </location>
</feature>
<feature type="helix" evidence="14">
    <location>
        <begin position="502"/>
        <end position="509"/>
    </location>
</feature>
<feature type="turn" evidence="14">
    <location>
        <begin position="510"/>
        <end position="512"/>
    </location>
</feature>
<feature type="strand" evidence="14">
    <location>
        <begin position="516"/>
        <end position="519"/>
    </location>
</feature>
<feature type="strand" evidence="14">
    <location>
        <begin position="524"/>
        <end position="532"/>
    </location>
</feature>
<feature type="turn" evidence="14">
    <location>
        <begin position="534"/>
        <end position="536"/>
    </location>
</feature>
<feature type="strand" evidence="14">
    <location>
        <begin position="539"/>
        <end position="544"/>
    </location>
</feature>
<feature type="strand" evidence="14">
    <location>
        <begin position="550"/>
        <end position="552"/>
    </location>
</feature>
<feature type="helix" evidence="14">
    <location>
        <begin position="555"/>
        <end position="558"/>
    </location>
</feature>
<feature type="strand" evidence="14">
    <location>
        <begin position="563"/>
        <end position="567"/>
    </location>
</feature>
<feature type="helix" evidence="14">
    <location>
        <begin position="568"/>
        <end position="570"/>
    </location>
</feature>
<feature type="strand" evidence="15">
    <location>
        <begin position="573"/>
        <end position="575"/>
    </location>
</feature>
<feature type="strand" evidence="14">
    <location>
        <begin position="577"/>
        <end position="582"/>
    </location>
</feature>
<protein>
    <recommendedName>
        <fullName evidence="2">Ufm1-specific protease</fullName>
        <shortName evidence="2">UfSP</shortName>
        <ecNumber evidence="7">3.4.22.-</ecNumber>
    </recommendedName>
    <alternativeName>
        <fullName evidence="9">Odorant response abnormal protein 8</fullName>
    </alternativeName>
</protein>
<sequence>MTNSQTVSLIGPTQMAPQSTPPPPVNELWFIDAQAMFQNYANLRSFSKSNANEINTTIGGFVFGRKARKQVIHVLFAYAEDLTESNRQFLESSLSADIELVGNLNIDGQSQILPGGQFTLQLTSRMLENRSISEFLDMNVMFNNEHVLMEGASCVSRVGYEWSLRAGREQEDVKSAAERLSMASFRFTYLNAEHGLVIREQKPEAAQQKYLDKFSKGAVPYKDVIEFTAMQSLTRDTSNDTEDQKLVPTVKVTKDNKHFTRLVTIGEVVFPAFFGDSSLDLYKRSREAFNRRANNTMMVTVNGIRAGRGVTTTTSATYLPPGWVSLLHLQLPTKWTDNEQRNYRIRLHKLFNLPSSKPVLRLSQALALHSESARLTNKKLIREPHLSITNYQPVGEITTVNGPYNYHHYMQDGIDDSGWGCAYRSFQTIWSWFILNGYTDKPVPSHREIQQALVDIQDKQAKFVGSRQWIGSTEISFVLNELLKLECRFIATNSGAEVVERVRELARHFETSGTPVMIGGNMLAHTILGVDFNDTTGETKFLVLDPHYTGSEDIKTITSKGWCAWKPASFWSKDHFYNMVLPQPPSDAI</sequence>
<evidence type="ECO:0000250" key="1">
    <source>
        <dbReference type="UniProtKB" id="Q99K23"/>
    </source>
</evidence>
<evidence type="ECO:0000250" key="2">
    <source>
        <dbReference type="UniProtKB" id="Q9NUQ7"/>
    </source>
</evidence>
<evidence type="ECO:0000256" key="3">
    <source>
        <dbReference type="SAM" id="MobiDB-lite"/>
    </source>
</evidence>
<evidence type="ECO:0000269" key="4">
    <source>
    </source>
</evidence>
<evidence type="ECO:0000269" key="5">
    <source>
    </source>
</evidence>
<evidence type="ECO:0000269" key="6">
    <source>
    </source>
</evidence>
<evidence type="ECO:0000269" key="7">
    <source>
    </source>
</evidence>
<evidence type="ECO:0000269" key="8">
    <source>
    </source>
</evidence>
<evidence type="ECO:0000303" key="9">
    <source>
    </source>
</evidence>
<evidence type="ECO:0000305" key="10"/>
<evidence type="ECO:0000305" key="11">
    <source>
    </source>
</evidence>
<evidence type="ECO:0000312" key="12">
    <source>
        <dbReference type="WormBase" id="F38A5.1a"/>
    </source>
</evidence>
<evidence type="ECO:0007744" key="13">
    <source>
        <dbReference type="PDB" id="5XDA"/>
    </source>
</evidence>
<evidence type="ECO:0007829" key="14">
    <source>
        <dbReference type="PDB" id="5EJJ"/>
    </source>
</evidence>
<evidence type="ECO:0007829" key="15">
    <source>
        <dbReference type="PDB" id="5XDA"/>
    </source>
</evidence>
<accession>Q94218</accession>
<accession>Q86MF8</accession>
<dbReference type="EC" id="3.4.22.-" evidence="7"/>
<dbReference type="EMBL" id="FO080844">
    <property type="protein sequence ID" value="CCD67166.1"/>
    <property type="molecule type" value="Genomic_DNA"/>
</dbReference>
<dbReference type="EMBL" id="FO080844">
    <property type="protein sequence ID" value="CCD67167.1"/>
    <property type="molecule type" value="Genomic_DNA"/>
</dbReference>
<dbReference type="PIR" id="T29897">
    <property type="entry name" value="T29897"/>
</dbReference>
<dbReference type="RefSeq" id="NP_001023188.1">
    <molecule id="Q94218-1"/>
    <property type="nucleotide sequence ID" value="NM_001028017.4"/>
</dbReference>
<dbReference type="RefSeq" id="NP_001023189.1">
    <molecule id="Q94218-2"/>
    <property type="nucleotide sequence ID" value="NM_001028018.2"/>
</dbReference>
<dbReference type="PDB" id="5EJJ">
    <property type="method" value="X-ray"/>
    <property type="resolution" value="2.80 A"/>
    <property type="chains" value="A/B=26-589"/>
</dbReference>
<dbReference type="PDB" id="5XDA">
    <property type="method" value="X-ray"/>
    <property type="resolution" value="3.29 A"/>
    <property type="chains" value="A/B/C/D/E/F=25-589"/>
</dbReference>
<dbReference type="PDBsum" id="5EJJ"/>
<dbReference type="PDBsum" id="5XDA"/>
<dbReference type="SMR" id="Q94218"/>
<dbReference type="BioGRID" id="42538">
    <property type="interactions" value="7"/>
</dbReference>
<dbReference type="FunCoup" id="Q94218">
    <property type="interactions" value="5"/>
</dbReference>
<dbReference type="STRING" id="6239.F38A5.1a.1"/>
<dbReference type="MEROPS" id="C78.A03"/>
<dbReference type="PaxDb" id="6239-F38A5.1a"/>
<dbReference type="PeptideAtlas" id="Q94218"/>
<dbReference type="EnsemblMetazoa" id="F38A5.1a.1">
    <molecule id="Q94218-1"/>
    <property type="protein sequence ID" value="F38A5.1a.1"/>
    <property type="gene ID" value="WBGene00018160"/>
</dbReference>
<dbReference type="EnsemblMetazoa" id="F38A5.1b.1">
    <molecule id="Q94218-2"/>
    <property type="protein sequence ID" value="F38A5.1b.1"/>
    <property type="gene ID" value="WBGene00018160"/>
</dbReference>
<dbReference type="GeneID" id="177417"/>
<dbReference type="KEGG" id="cel:CELE_F38A5.1"/>
<dbReference type="UCSC" id="F38A5.1a">
    <molecule id="Q94218-1"/>
    <property type="organism name" value="c. elegans"/>
</dbReference>
<dbReference type="AGR" id="WB:WBGene00018160"/>
<dbReference type="CTD" id="177417"/>
<dbReference type="WormBase" id="F38A5.1a">
    <molecule id="Q94218-1"/>
    <property type="protein sequence ID" value="CE10028"/>
    <property type="gene ID" value="WBGene00018160"/>
    <property type="gene designation" value="odr-8"/>
</dbReference>
<dbReference type="WormBase" id="F38A5.1b">
    <molecule id="Q94218-2"/>
    <property type="protein sequence ID" value="CE33641"/>
    <property type="gene ID" value="WBGene00018160"/>
    <property type="gene designation" value="odr-8"/>
</dbReference>
<dbReference type="eggNOG" id="KOG2433">
    <property type="taxonomic scope" value="Eukaryota"/>
</dbReference>
<dbReference type="GeneTree" id="ENSGT00940000157115"/>
<dbReference type="InParanoid" id="Q94218"/>
<dbReference type="OMA" id="NGFTDKP"/>
<dbReference type="OrthoDB" id="417506at2759"/>
<dbReference type="PRO" id="PR:Q94218"/>
<dbReference type="Proteomes" id="UP000001940">
    <property type="component" value="Chromosome IV"/>
</dbReference>
<dbReference type="Bgee" id="WBGene00018160">
    <property type="expression patterns" value="Expressed in adult organism and 4 other cell types or tissues"/>
</dbReference>
<dbReference type="GO" id="GO:0005783">
    <property type="term" value="C:endoplasmic reticulum"/>
    <property type="evidence" value="ECO:0000318"/>
    <property type="project" value="GO_Central"/>
</dbReference>
<dbReference type="GO" id="GO:0005789">
    <property type="term" value="C:endoplasmic reticulum membrane"/>
    <property type="evidence" value="ECO:0007669"/>
    <property type="project" value="UniProtKB-SubCell"/>
</dbReference>
<dbReference type="GO" id="GO:0005634">
    <property type="term" value="C:nucleus"/>
    <property type="evidence" value="ECO:0000318"/>
    <property type="project" value="GO_Central"/>
</dbReference>
<dbReference type="GO" id="GO:0048471">
    <property type="term" value="C:perinuclear region of cytoplasm"/>
    <property type="evidence" value="ECO:0007669"/>
    <property type="project" value="UniProtKB-SubCell"/>
</dbReference>
<dbReference type="GO" id="GO:0032991">
    <property type="term" value="C:protein-containing complex"/>
    <property type="evidence" value="ECO:0000314"/>
    <property type="project" value="WormBase"/>
</dbReference>
<dbReference type="GO" id="GO:0071567">
    <property type="term" value="F:deUFMylase activity"/>
    <property type="evidence" value="ECO:0000314"/>
    <property type="project" value="UniProtKB"/>
</dbReference>
<dbReference type="GO" id="GO:0006935">
    <property type="term" value="P:chemotaxis"/>
    <property type="evidence" value="ECO:0007669"/>
    <property type="project" value="UniProtKB-KW"/>
</dbReference>
<dbReference type="GO" id="GO:0050921">
    <property type="term" value="P:positive regulation of chemotaxis"/>
    <property type="evidence" value="ECO:0000315"/>
    <property type="project" value="WormBase"/>
</dbReference>
<dbReference type="GO" id="GO:0097499">
    <property type="term" value="P:protein localization to non-motile cilium"/>
    <property type="evidence" value="ECO:0000315"/>
    <property type="project" value="WormBase"/>
</dbReference>
<dbReference type="GO" id="GO:0006508">
    <property type="term" value="P:proteolysis"/>
    <property type="evidence" value="ECO:0000314"/>
    <property type="project" value="UniProtKB"/>
</dbReference>
<dbReference type="GO" id="GO:0045471">
    <property type="term" value="P:response to ethanol"/>
    <property type="evidence" value="ECO:0000316"/>
    <property type="project" value="WormBase"/>
</dbReference>
<dbReference type="FunFam" id="3.90.70.130:FF:000001">
    <property type="entry name" value="Probable Ufm1-specific protease 2"/>
    <property type="match status" value="1"/>
</dbReference>
<dbReference type="Gene3D" id="3.90.70.130">
    <property type="match status" value="1"/>
</dbReference>
<dbReference type="InterPro" id="IPR038765">
    <property type="entry name" value="Papain-like_cys_pep_sf"/>
</dbReference>
<dbReference type="InterPro" id="IPR012462">
    <property type="entry name" value="UfSP1/2_DUB_cat"/>
</dbReference>
<dbReference type="InterPro" id="IPR049387">
    <property type="entry name" value="UfSP2-like_N"/>
</dbReference>
<dbReference type="InterPro" id="IPR054308">
    <property type="entry name" value="UfSP_MPN"/>
</dbReference>
<dbReference type="PANTHER" id="PTHR48153">
    <property type="entry name" value="UFM1-SPECIFIC PROTEASE 2"/>
    <property type="match status" value="1"/>
</dbReference>
<dbReference type="PANTHER" id="PTHR48153:SF2">
    <property type="entry name" value="UFM1-SPECIFIC PROTEASE 2"/>
    <property type="match status" value="1"/>
</dbReference>
<dbReference type="Pfam" id="PF07910">
    <property type="entry name" value="Peptidase_C78"/>
    <property type="match status" value="1"/>
</dbReference>
<dbReference type="Pfam" id="PF20908">
    <property type="entry name" value="UfSP2_N"/>
    <property type="match status" value="1"/>
</dbReference>
<dbReference type="Pfam" id="PF22084">
    <property type="entry name" value="UfSP_MPN_N"/>
    <property type="match status" value="1"/>
</dbReference>
<dbReference type="SUPFAM" id="SSF54001">
    <property type="entry name" value="Cysteine proteinases"/>
    <property type="match status" value="1"/>
</dbReference>
<organism>
    <name type="scientific">Caenorhabditis elegans</name>
    <dbReference type="NCBI Taxonomy" id="6239"/>
    <lineage>
        <taxon>Eukaryota</taxon>
        <taxon>Metazoa</taxon>
        <taxon>Ecdysozoa</taxon>
        <taxon>Nematoda</taxon>
        <taxon>Chromadorea</taxon>
        <taxon>Rhabditida</taxon>
        <taxon>Rhabditina</taxon>
        <taxon>Rhabditomorpha</taxon>
        <taxon>Rhabditoidea</taxon>
        <taxon>Rhabditidae</taxon>
        <taxon>Peloderinae</taxon>
        <taxon>Caenorhabditis</taxon>
    </lineage>
</organism>
<reference key="1">
    <citation type="journal article" date="1998" name="Science">
        <title>Genome sequence of the nematode C. elegans: a platform for investigating biology.</title>
        <authorList>
            <consortium name="The C. elegans sequencing consortium"/>
        </authorList>
    </citation>
    <scope>NUCLEOTIDE SEQUENCE [LARGE SCALE GENOMIC DNA]</scope>
    <scope>ALTERNATIVE SPLICING</scope>
    <source>
        <strain>Bristol N2</strain>
    </source>
</reference>
<reference key="2">
    <citation type="journal article" date="1998" name="Cell">
        <title>Odorant receptor localization to olfactory cilia is mediated by ODR-4, a novel membrane-associated protein.</title>
        <authorList>
            <person name="Dwyer N.D."/>
            <person name="Troemel E.R."/>
            <person name="Sengupta P."/>
            <person name="Bargmann C.I."/>
        </authorList>
    </citation>
    <scope>FUNCTION</scope>
    <scope>DISRUPTION PHENOTYPE</scope>
</reference>
<reference key="3">
    <citation type="journal article" date="2002" name="Nature">
        <title>Social feeding in Caenorhabditis elegans is induced by neurons that detect aversive stimuli.</title>
        <authorList>
            <person name="de Bono M."/>
            <person name="Tobin D.M."/>
            <person name="Davis M.W."/>
            <person name="Avery L."/>
            <person name="Bargmann C.I."/>
        </authorList>
    </citation>
    <scope>FUNCTION</scope>
    <scope>DISRUPTION PHENOTYPE</scope>
</reference>
<reference key="4">
    <citation type="journal article" date="2013" name="J. Biol. Chem.">
        <title>The ubiquitin-fold modifier 1 (Ufm1) cascade of Caenorhabditis elegans.</title>
        <authorList>
            <person name="Hertel P."/>
            <person name="Daniel J."/>
            <person name="Stegehake D."/>
            <person name="Vaupel H."/>
            <person name="Kailayangiri S."/>
            <person name="Gruel C."/>
            <person name="Woltersdorf C."/>
            <person name="Liebau E."/>
        </authorList>
    </citation>
    <scope>SUBCELLULAR LOCATION</scope>
    <scope>TISSUE SPECIFICITY</scope>
</reference>
<reference key="5">
    <citation type="journal article" date="2014" name="PLoS Genet.">
        <title>An ER complex of ODR-4 and ODR-8/Ufm1 specific protease 2 promotes GPCR maturation by a Ufm1-independent mechanism.</title>
        <authorList>
            <person name="Chen C."/>
            <person name="Itakura E."/>
            <person name="Weber K.P."/>
            <person name="Hegde R.S."/>
            <person name="de Bono M."/>
        </authorList>
    </citation>
    <scope>FUNCTION</scope>
    <scope>INTERACTION WITH ODR-4</scope>
    <scope>SUBCELLULAR LOCATION</scope>
    <scope>TISSUE SPECIFICITY</scope>
    <scope>DISRUPTION PHENOTYPE</scope>
    <scope>MUTAGENESIS OF CYS-421 AND HIS-547</scope>
</reference>
<reference evidence="13" key="6">
    <citation type="journal article" date="2018" name="FEBS Lett.">
        <title>Structural basis for Ufm1 recognition by UfSP.</title>
        <authorList>
            <person name="Kim K.H."/>
            <person name="Ha B.H."/>
            <person name="Kim E.E."/>
        </authorList>
    </citation>
    <scope>X-RAY CRYSTALLOGRAPHY (3.29 ANGSTROMS) OF 25-589 IN COMPLEX WITH UFM-1</scope>
    <scope>FUNCTION</scope>
    <scope>CATALYTIC ACTIVITY</scope>
    <scope>MUTAGENESIS OF TYR-409; CYS-421; ASP-458; TRP-469; ARG-488; HIS-547 AND ASN-578</scope>
</reference>
<comment type="function">
    <text evidence="4 6 7 8">Thiol protease which recognizes and hydrolyzes the peptide bond at the C-terminal Gly of ufm-1, a ubiquitin-like modifier protein bound to a number of target proteins (PubMed:24603482, PubMed:29251776). Required, with oct-4, for the localization of a subset of 7 transmembrane domain odorant receptors, including odr-10, to the cilia of olfactory neurons AWA and AWC (PubMed:9590179). Operates in aggregation behavior, and responses to oxygen levels (PubMed:12410303).</text>
</comment>
<comment type="subunit">
    <text evidence="6">Interacts with odr-4.</text>
</comment>
<comment type="subcellular location">
    <subcellularLocation>
        <location evidence="5 6">Endoplasmic reticulum membrane</location>
        <topology evidence="6">Peripheral membrane protein</topology>
    </subcellularLocation>
    <subcellularLocation>
        <location evidence="6">Cytoplasm</location>
    </subcellularLocation>
    <subcellularLocation>
        <location evidence="5">Cytoplasm</location>
        <location evidence="5">Perinuclear region</location>
    </subcellularLocation>
    <text evidence="6">Recruited to the endoplasmic reticulum upon interaction with odr-4.</text>
</comment>
<comment type="alternative products">
    <event type="alternative splicing"/>
    <isoform>
        <id>Q94218-1</id>
        <name>a</name>
        <sequence type="displayed"/>
    </isoform>
    <isoform>
        <id>Q94218-2</id>
        <name>b</name>
        <sequence type="described" ref="VSP_023644"/>
    </isoform>
</comment>
<comment type="tissue specificity">
    <text evidence="5 6">Expressed in head and tail neurons (PubMed:24603482). Expressed in the amphid head neurons ADL, ASI, ASH, ASJ, ASG, ADF, ASK, AWA, AWB, AWC, and in two tail neurons, the phasmid tail neurons PHA and PHB (PubMed:23449979).</text>
</comment>
<comment type="disruption phenotype">
    <text evidence="4 6 8">Aberrant localization of odr-10, str-2, str-112 and str-113. Reduced response to odorants mediated by AWA and AWC olfactory neurons. Increased aggregation and response to O2 levels when knocked down with npr-1.</text>
</comment>
<comment type="similarity">
    <text evidence="10">Belongs to the peptidase C78 family.</text>
</comment>
<keyword id="KW-0002">3D-structure</keyword>
<keyword id="KW-0025">Alternative splicing</keyword>
<keyword id="KW-0145">Chemotaxis</keyword>
<keyword id="KW-0963">Cytoplasm</keyword>
<keyword id="KW-0256">Endoplasmic reticulum</keyword>
<keyword id="KW-0378">Hydrolase</keyword>
<keyword id="KW-0472">Membrane</keyword>
<keyword id="KW-0645">Protease</keyword>
<keyword id="KW-1185">Reference proteome</keyword>
<keyword id="KW-0788">Thiol protease</keyword>
<keyword id="KW-0833">Ubl conjugation pathway</keyword>
<gene>
    <name evidence="9 12" type="primary">odr-8</name>
    <name evidence="12" type="synonym">ufsp-2</name>
    <name evidence="12" type="ORF">F38A5.1</name>
</gene>